<sequence length="616" mass="71344">MSWGTELWDQFDNLEKHTQWGIDILEKYIKFVKERTEIELSYAKQLRNLSKKYQPKKNSKEEEEYKYTACKAFLSTLNEMNDYAGQHEVISENMTSQITVDLMRYVQELKQERKSNFHDGRKAQQHIETCWKQLESSKRRFERDCKEADRAQQYFEKMDADINVTKADVEKARQQAQIRQQMAEDSKADYSLILQRFNQEQWEYYHTHIPNIFQKIQEMEERRIVRIGESMKTYAEVDRQVIPIIGKCLDGIVKAAESIDQKNDSQLVVEAYKSGFEPPGDIEFEDYTQPMKRTVSDNSLSSSKEGKPELRFGGKSRGKLWPFIKKNKLMSLLTSPHQPPPPPPASASPSAVPNGPQSPKQPKEPLSHRFNEFMTSKPKIHCFRSLKRGLSLKLGVTPEDFSNFPPEQRRKKLQQKVDDLNREIQKETDQRDAITKMKDVYLKNPQMGDPASLDQKLTEVTQNIEKLRLEAQKFEAWLAEVEGRLPARSEQARRQSGLYDGQTHQTVTNCAQDRESPDGSYTEEQSQESEHKVLAPDFDDEFDDEEPLPAIGTCKALYTFEGQNEGTISVVEGETLSVIEEDKGDGWTRIRRNEDEEGYVPTSYVEVYLDKNAKGS</sequence>
<gene>
    <name type="primary">Fnbp1</name>
    <name type="synonym">Fbp17</name>
    <name type="synonym">Kiaa0554</name>
</gene>
<reference key="1">
    <citation type="journal article" date="2003" name="DNA Res.">
        <title>Prediction of the coding sequences of mouse homologues of KIAA gene: II. The complete nucleotide sequences of 400 mouse KIAA-homologous cDNAs identified by screening of terminal sequences of cDNA clones randomly sampled from size-fractionated libraries.</title>
        <authorList>
            <person name="Okazaki N."/>
            <person name="Kikuno R."/>
            <person name="Ohara R."/>
            <person name="Inamoto S."/>
            <person name="Aizawa H."/>
            <person name="Yuasa S."/>
            <person name="Nakajima D."/>
            <person name="Nagase T."/>
            <person name="Ohara O."/>
            <person name="Koga H."/>
        </authorList>
    </citation>
    <scope>NUCLEOTIDE SEQUENCE [LARGE SCALE MRNA] (ISOFORM 1)</scope>
    <source>
        <tissue>Brain</tissue>
    </source>
</reference>
<reference key="2">
    <citation type="journal article" date="2005" name="Science">
        <title>The transcriptional landscape of the mammalian genome.</title>
        <authorList>
            <person name="Carninci P."/>
            <person name="Kasukawa T."/>
            <person name="Katayama S."/>
            <person name="Gough J."/>
            <person name="Frith M.C."/>
            <person name="Maeda N."/>
            <person name="Oyama R."/>
            <person name="Ravasi T."/>
            <person name="Lenhard B."/>
            <person name="Wells C."/>
            <person name="Kodzius R."/>
            <person name="Shimokawa K."/>
            <person name="Bajic V.B."/>
            <person name="Brenner S.E."/>
            <person name="Batalov S."/>
            <person name="Forrest A.R."/>
            <person name="Zavolan M."/>
            <person name="Davis M.J."/>
            <person name="Wilming L.G."/>
            <person name="Aidinis V."/>
            <person name="Allen J.E."/>
            <person name="Ambesi-Impiombato A."/>
            <person name="Apweiler R."/>
            <person name="Aturaliya R.N."/>
            <person name="Bailey T.L."/>
            <person name="Bansal M."/>
            <person name="Baxter L."/>
            <person name="Beisel K.W."/>
            <person name="Bersano T."/>
            <person name="Bono H."/>
            <person name="Chalk A.M."/>
            <person name="Chiu K.P."/>
            <person name="Choudhary V."/>
            <person name="Christoffels A."/>
            <person name="Clutterbuck D.R."/>
            <person name="Crowe M.L."/>
            <person name="Dalla E."/>
            <person name="Dalrymple B.P."/>
            <person name="de Bono B."/>
            <person name="Della Gatta G."/>
            <person name="di Bernardo D."/>
            <person name="Down T."/>
            <person name="Engstrom P."/>
            <person name="Fagiolini M."/>
            <person name="Faulkner G."/>
            <person name="Fletcher C.F."/>
            <person name="Fukushima T."/>
            <person name="Furuno M."/>
            <person name="Futaki S."/>
            <person name="Gariboldi M."/>
            <person name="Georgii-Hemming P."/>
            <person name="Gingeras T.R."/>
            <person name="Gojobori T."/>
            <person name="Green R.E."/>
            <person name="Gustincich S."/>
            <person name="Harbers M."/>
            <person name="Hayashi Y."/>
            <person name="Hensch T.K."/>
            <person name="Hirokawa N."/>
            <person name="Hill D."/>
            <person name="Huminiecki L."/>
            <person name="Iacono M."/>
            <person name="Ikeo K."/>
            <person name="Iwama A."/>
            <person name="Ishikawa T."/>
            <person name="Jakt M."/>
            <person name="Kanapin A."/>
            <person name="Katoh M."/>
            <person name="Kawasawa Y."/>
            <person name="Kelso J."/>
            <person name="Kitamura H."/>
            <person name="Kitano H."/>
            <person name="Kollias G."/>
            <person name="Krishnan S.P."/>
            <person name="Kruger A."/>
            <person name="Kummerfeld S.K."/>
            <person name="Kurochkin I.V."/>
            <person name="Lareau L.F."/>
            <person name="Lazarevic D."/>
            <person name="Lipovich L."/>
            <person name="Liu J."/>
            <person name="Liuni S."/>
            <person name="McWilliam S."/>
            <person name="Madan Babu M."/>
            <person name="Madera M."/>
            <person name="Marchionni L."/>
            <person name="Matsuda H."/>
            <person name="Matsuzawa S."/>
            <person name="Miki H."/>
            <person name="Mignone F."/>
            <person name="Miyake S."/>
            <person name="Morris K."/>
            <person name="Mottagui-Tabar S."/>
            <person name="Mulder N."/>
            <person name="Nakano N."/>
            <person name="Nakauchi H."/>
            <person name="Ng P."/>
            <person name="Nilsson R."/>
            <person name="Nishiguchi S."/>
            <person name="Nishikawa S."/>
            <person name="Nori F."/>
            <person name="Ohara O."/>
            <person name="Okazaki Y."/>
            <person name="Orlando V."/>
            <person name="Pang K.C."/>
            <person name="Pavan W.J."/>
            <person name="Pavesi G."/>
            <person name="Pesole G."/>
            <person name="Petrovsky N."/>
            <person name="Piazza S."/>
            <person name="Reed J."/>
            <person name="Reid J.F."/>
            <person name="Ring B.Z."/>
            <person name="Ringwald M."/>
            <person name="Rost B."/>
            <person name="Ruan Y."/>
            <person name="Salzberg S.L."/>
            <person name="Sandelin A."/>
            <person name="Schneider C."/>
            <person name="Schoenbach C."/>
            <person name="Sekiguchi K."/>
            <person name="Semple C.A."/>
            <person name="Seno S."/>
            <person name="Sessa L."/>
            <person name="Sheng Y."/>
            <person name="Shibata Y."/>
            <person name="Shimada H."/>
            <person name="Shimada K."/>
            <person name="Silva D."/>
            <person name="Sinclair B."/>
            <person name="Sperling S."/>
            <person name="Stupka E."/>
            <person name="Sugiura K."/>
            <person name="Sultana R."/>
            <person name="Takenaka Y."/>
            <person name="Taki K."/>
            <person name="Tammoja K."/>
            <person name="Tan S.L."/>
            <person name="Tang S."/>
            <person name="Taylor M.S."/>
            <person name="Tegner J."/>
            <person name="Teichmann S.A."/>
            <person name="Ueda H.R."/>
            <person name="van Nimwegen E."/>
            <person name="Verardo R."/>
            <person name="Wei C.L."/>
            <person name="Yagi K."/>
            <person name="Yamanishi H."/>
            <person name="Zabarovsky E."/>
            <person name="Zhu S."/>
            <person name="Zimmer A."/>
            <person name="Hide W."/>
            <person name="Bult C."/>
            <person name="Grimmond S.M."/>
            <person name="Teasdale R.D."/>
            <person name="Liu E.T."/>
            <person name="Brusic V."/>
            <person name="Quackenbush J."/>
            <person name="Wahlestedt C."/>
            <person name="Mattick J.S."/>
            <person name="Hume D.A."/>
            <person name="Kai C."/>
            <person name="Sasaki D."/>
            <person name="Tomaru Y."/>
            <person name="Fukuda S."/>
            <person name="Kanamori-Katayama M."/>
            <person name="Suzuki M."/>
            <person name="Aoki J."/>
            <person name="Arakawa T."/>
            <person name="Iida J."/>
            <person name="Imamura K."/>
            <person name="Itoh M."/>
            <person name="Kato T."/>
            <person name="Kawaji H."/>
            <person name="Kawagashira N."/>
            <person name="Kawashima T."/>
            <person name="Kojima M."/>
            <person name="Kondo S."/>
            <person name="Konno H."/>
            <person name="Nakano K."/>
            <person name="Ninomiya N."/>
            <person name="Nishio T."/>
            <person name="Okada M."/>
            <person name="Plessy C."/>
            <person name="Shibata K."/>
            <person name="Shiraki T."/>
            <person name="Suzuki S."/>
            <person name="Tagami M."/>
            <person name="Waki K."/>
            <person name="Watahiki A."/>
            <person name="Okamura-Oho Y."/>
            <person name="Suzuki H."/>
            <person name="Kawai J."/>
            <person name="Hayashizaki Y."/>
        </authorList>
    </citation>
    <scope>NUCLEOTIDE SEQUENCE [LARGE SCALE MRNA] (ISOFORMS 2; 3 AND 4)</scope>
    <scope>NUCLEOTIDE SEQUENCE [LARGE SCALE MRNA] OF 169-616 (ISOFORM 5)</scope>
    <source>
        <strain>C57BL/6J</strain>
        <strain>NOD</strain>
        <tissue>Dendritic cell</tissue>
        <tissue>Embryo</tissue>
        <tissue>Kidney</tissue>
        <tissue>Spleen</tissue>
    </source>
</reference>
<reference key="3">
    <citation type="journal article" date="2009" name="PLoS Biol.">
        <title>Lineage-specific biology revealed by a finished genome assembly of the mouse.</title>
        <authorList>
            <person name="Church D.M."/>
            <person name="Goodstadt L."/>
            <person name="Hillier L.W."/>
            <person name="Zody M.C."/>
            <person name="Goldstein S."/>
            <person name="She X."/>
            <person name="Bult C.J."/>
            <person name="Agarwala R."/>
            <person name="Cherry J.L."/>
            <person name="DiCuccio M."/>
            <person name="Hlavina W."/>
            <person name="Kapustin Y."/>
            <person name="Meric P."/>
            <person name="Maglott D."/>
            <person name="Birtle Z."/>
            <person name="Marques A.C."/>
            <person name="Graves T."/>
            <person name="Zhou S."/>
            <person name="Teague B."/>
            <person name="Potamousis K."/>
            <person name="Churas C."/>
            <person name="Place M."/>
            <person name="Herschleb J."/>
            <person name="Runnheim R."/>
            <person name="Forrest D."/>
            <person name="Amos-Landgraf J."/>
            <person name="Schwartz D.C."/>
            <person name="Cheng Z."/>
            <person name="Lindblad-Toh K."/>
            <person name="Eichler E.E."/>
            <person name="Ponting C.P."/>
        </authorList>
    </citation>
    <scope>NUCLEOTIDE SEQUENCE [LARGE SCALE GENOMIC DNA]</scope>
    <source>
        <strain>C57BL/6J</strain>
    </source>
</reference>
<reference key="4">
    <citation type="journal article" date="2004" name="Genome Res.">
        <title>The status, quality, and expansion of the NIH full-length cDNA project: the Mammalian Gene Collection (MGC).</title>
        <authorList>
            <consortium name="The MGC Project Team"/>
        </authorList>
    </citation>
    <scope>NUCLEOTIDE SEQUENCE [LARGE SCALE MRNA] (ISOFORM 5)</scope>
    <source>
        <strain>FVB/N</strain>
        <tissue>Mammary gland</tissue>
    </source>
</reference>
<reference key="5">
    <citation type="journal article" date="2004" name="J. Biol. Chem.">
        <title>A novel dynamin-associating molecule, formin-binding protein 17, induces tubular membrane invaginations and participates in endocytosis.</title>
        <authorList>
            <person name="Kamioka Y."/>
            <person name="Fukuhara S."/>
            <person name="Sawa H."/>
            <person name="Nagashima K."/>
            <person name="Masuda M."/>
            <person name="Matsuda M."/>
            <person name="Mochizuki N."/>
        </authorList>
    </citation>
    <scope>TISSUE SPECIFICITY</scope>
</reference>
<reference key="6">
    <citation type="journal article" date="2007" name="J. Immunol.">
        <title>Quantitative time-resolved phosphoproteomic analysis of mast cell signaling.</title>
        <authorList>
            <person name="Cao L."/>
            <person name="Yu K."/>
            <person name="Banh C."/>
            <person name="Nguyen V."/>
            <person name="Ritz A."/>
            <person name="Raphael B.J."/>
            <person name="Kawakami Y."/>
            <person name="Kawakami T."/>
            <person name="Salomon A.R."/>
        </authorList>
    </citation>
    <scope>PHOSPHORYLATION [LARGE SCALE ANALYSIS] AT SER-496 AND TYR-499</scope>
    <scope>IDENTIFICATION BY MASS SPECTROMETRY [LARGE SCALE ANALYSIS]</scope>
    <source>
        <tissue>Mast cell</tissue>
    </source>
</reference>
<reference key="7">
    <citation type="journal article" date="2009" name="Immunity">
        <title>The phagosomal proteome in interferon-gamma-activated macrophages.</title>
        <authorList>
            <person name="Trost M."/>
            <person name="English L."/>
            <person name="Lemieux S."/>
            <person name="Courcelles M."/>
            <person name="Desjardins M."/>
            <person name="Thibault P."/>
        </authorList>
    </citation>
    <scope>PHOSPHORYLATION [LARGE SCALE ANALYSIS] AT SER-296</scope>
    <scope>IDENTIFICATION BY MASS SPECTROMETRY [LARGE SCALE ANALYSIS]</scope>
</reference>
<reference key="8">
    <citation type="journal article" date="2010" name="Cell">
        <title>A tissue-specific atlas of mouse protein phosphorylation and expression.</title>
        <authorList>
            <person name="Huttlin E.L."/>
            <person name="Jedrychowski M.P."/>
            <person name="Elias J.E."/>
            <person name="Goswami T."/>
            <person name="Rad R."/>
            <person name="Beausoleil S.A."/>
            <person name="Villen J."/>
            <person name="Haas W."/>
            <person name="Sowa M.E."/>
            <person name="Gygi S.P."/>
        </authorList>
    </citation>
    <scope>PHOSPHORYLATION [LARGE SCALE ANALYSIS] AT SER-496</scope>
    <scope>IDENTIFICATION BY MASS SPECTROMETRY [LARGE SCALE ANALYSIS]</scope>
    <source>
        <tissue>Brain</tissue>
        <tissue>Kidney</tissue>
        <tissue>Lung</tissue>
        <tissue>Spleen</tissue>
    </source>
</reference>
<evidence type="ECO:0000250" key="1"/>
<evidence type="ECO:0000250" key="2">
    <source>
        <dbReference type="UniProtKB" id="Q8R511"/>
    </source>
</evidence>
<evidence type="ECO:0000250" key="3">
    <source>
        <dbReference type="UniProtKB" id="Q96RU3"/>
    </source>
</evidence>
<evidence type="ECO:0000255" key="4">
    <source>
        <dbReference type="PROSITE-ProRule" id="PRU00192"/>
    </source>
</evidence>
<evidence type="ECO:0000255" key="5">
    <source>
        <dbReference type="PROSITE-ProRule" id="PRU01077"/>
    </source>
</evidence>
<evidence type="ECO:0000255" key="6">
    <source>
        <dbReference type="PROSITE-ProRule" id="PRU01207"/>
    </source>
</evidence>
<evidence type="ECO:0000256" key="7">
    <source>
        <dbReference type="SAM" id="MobiDB-lite"/>
    </source>
</evidence>
<evidence type="ECO:0000269" key="8">
    <source>
    </source>
</evidence>
<evidence type="ECO:0000303" key="9">
    <source>
    </source>
</evidence>
<evidence type="ECO:0000303" key="10">
    <source>
    </source>
</evidence>
<evidence type="ECO:0000305" key="11"/>
<evidence type="ECO:0007744" key="12">
    <source>
    </source>
</evidence>
<evidence type="ECO:0007744" key="13">
    <source>
    </source>
</evidence>
<evidence type="ECO:0007744" key="14">
    <source>
    </source>
</evidence>
<accession>Q80TY0</accession>
<accession>A2AQ40</accession>
<accession>A2AQ46</accession>
<accession>Q3TA45</accession>
<accession>Q3TCW9</accession>
<accession>Q3U081</accession>
<accession>Q3UPI7</accession>
<accession>Q8C727</accession>
<accession>Q99L37</accession>
<protein>
    <recommendedName>
        <fullName>Formin-binding protein 1</fullName>
    </recommendedName>
    <alternativeName>
        <fullName>Formin-binding protein 17</fullName>
    </alternativeName>
</protein>
<organism>
    <name type="scientific">Mus musculus</name>
    <name type="common">Mouse</name>
    <dbReference type="NCBI Taxonomy" id="10090"/>
    <lineage>
        <taxon>Eukaryota</taxon>
        <taxon>Metazoa</taxon>
        <taxon>Chordata</taxon>
        <taxon>Craniata</taxon>
        <taxon>Vertebrata</taxon>
        <taxon>Euteleostomi</taxon>
        <taxon>Mammalia</taxon>
        <taxon>Eutheria</taxon>
        <taxon>Euarchontoglires</taxon>
        <taxon>Glires</taxon>
        <taxon>Rodentia</taxon>
        <taxon>Myomorpha</taxon>
        <taxon>Muroidea</taxon>
        <taxon>Muridae</taxon>
        <taxon>Murinae</taxon>
        <taxon>Mus</taxon>
        <taxon>Mus</taxon>
    </lineage>
</organism>
<dbReference type="EMBL" id="AK122308">
    <property type="protein sequence ID" value="BAC65590.1"/>
    <property type="status" value="ALT_INIT"/>
    <property type="molecule type" value="mRNA"/>
</dbReference>
<dbReference type="EMBL" id="AK052652">
    <property type="protein sequence ID" value="BAC35082.1"/>
    <property type="molecule type" value="mRNA"/>
</dbReference>
<dbReference type="EMBL" id="AK143512">
    <property type="protein sequence ID" value="BAE25408.1"/>
    <property type="molecule type" value="mRNA"/>
</dbReference>
<dbReference type="EMBL" id="AK157135">
    <property type="protein sequence ID" value="BAE33974.1"/>
    <property type="status" value="ALT_INIT"/>
    <property type="molecule type" value="mRNA"/>
</dbReference>
<dbReference type="EMBL" id="AK170497">
    <property type="protein sequence ID" value="BAE41836.1"/>
    <property type="molecule type" value="mRNA"/>
</dbReference>
<dbReference type="EMBL" id="AK172100">
    <property type="protein sequence ID" value="BAE42825.1"/>
    <property type="molecule type" value="mRNA"/>
</dbReference>
<dbReference type="EMBL" id="AL844546">
    <property type="status" value="NOT_ANNOTATED_CDS"/>
    <property type="molecule type" value="Genomic_DNA"/>
</dbReference>
<dbReference type="EMBL" id="BC003867">
    <property type="protein sequence ID" value="AAH03867.1"/>
    <property type="molecule type" value="mRNA"/>
</dbReference>
<dbReference type="CCDS" id="CCDS15894.1">
    <molecule id="Q80TY0-5"/>
</dbReference>
<dbReference type="CCDS" id="CCDS38097.1">
    <molecule id="Q80TY0-2"/>
</dbReference>
<dbReference type="CCDS" id="CCDS50560.1">
    <molecule id="Q80TY0-4"/>
</dbReference>
<dbReference type="CCDS" id="CCDS50561.1">
    <molecule id="Q80TY0-1"/>
</dbReference>
<dbReference type="CCDS" id="CCDS57165.1">
    <molecule id="Q80TY0-3"/>
</dbReference>
<dbReference type="RefSeq" id="NP_001033789.1">
    <molecule id="Q80TY0-2"/>
    <property type="nucleotide sequence ID" value="NM_001038700.2"/>
</dbReference>
<dbReference type="RefSeq" id="NP_001171119.1">
    <molecule id="Q80TY0-1"/>
    <property type="nucleotide sequence ID" value="NM_001177648.1"/>
</dbReference>
<dbReference type="RefSeq" id="NP_001171120.1">
    <molecule id="Q80TY0-3"/>
    <property type="nucleotide sequence ID" value="NM_001177649.1"/>
</dbReference>
<dbReference type="RefSeq" id="NP_001171121.1">
    <molecule id="Q80TY0-4"/>
    <property type="nucleotide sequence ID" value="NM_001177650.1"/>
</dbReference>
<dbReference type="RefSeq" id="NP_062279.1">
    <molecule id="Q80TY0-5"/>
    <property type="nucleotide sequence ID" value="NM_019406.3"/>
</dbReference>
<dbReference type="SMR" id="Q80TY0"/>
<dbReference type="BioGRID" id="199720">
    <property type="interactions" value="17"/>
</dbReference>
<dbReference type="FunCoup" id="Q80TY0">
    <property type="interactions" value="3102"/>
</dbReference>
<dbReference type="IntAct" id="Q80TY0">
    <property type="interactions" value="2"/>
</dbReference>
<dbReference type="MINT" id="Q80TY0"/>
<dbReference type="STRING" id="10090.ENSMUSP00000109190"/>
<dbReference type="iPTMnet" id="Q80TY0"/>
<dbReference type="PhosphoSitePlus" id="Q80TY0"/>
<dbReference type="SwissPalm" id="Q80TY0"/>
<dbReference type="jPOST" id="Q80TY0"/>
<dbReference type="PaxDb" id="10090-ENSMUSP00000109190"/>
<dbReference type="PeptideAtlas" id="Q80TY0"/>
<dbReference type="ProteomicsDB" id="267489">
    <molecule id="Q80TY0-1"/>
</dbReference>
<dbReference type="ProteomicsDB" id="267490">
    <molecule id="Q80TY0-2"/>
</dbReference>
<dbReference type="ProteomicsDB" id="267491">
    <molecule id="Q80TY0-3"/>
</dbReference>
<dbReference type="ProteomicsDB" id="267492">
    <molecule id="Q80TY0-4"/>
</dbReference>
<dbReference type="ProteomicsDB" id="267493">
    <molecule id="Q80TY0-5"/>
</dbReference>
<dbReference type="Pumba" id="Q80TY0"/>
<dbReference type="Antibodypedia" id="31452">
    <property type="antibodies" value="194 antibodies from 30 providers"/>
</dbReference>
<dbReference type="DNASU" id="14269"/>
<dbReference type="Ensembl" id="ENSMUST00000113552.9">
    <molecule id="Q80TY0-5"/>
    <property type="protein sequence ID" value="ENSMUSP00000109181.3"/>
    <property type="gene ID" value="ENSMUSG00000075415.14"/>
</dbReference>
<dbReference type="Ensembl" id="ENSMUST00000113559.10">
    <molecule id="Q80TY0-4"/>
    <property type="protein sequence ID" value="ENSMUSP00000109189.4"/>
    <property type="gene ID" value="ENSMUSG00000075415.14"/>
</dbReference>
<dbReference type="Ensembl" id="ENSMUST00000113560.8">
    <molecule id="Q80TY0-1"/>
    <property type="protein sequence ID" value="ENSMUSP00000109190.2"/>
    <property type="gene ID" value="ENSMUSG00000075415.14"/>
</dbReference>
<dbReference type="Ensembl" id="ENSMUST00000113562.9">
    <molecule id="Q80TY0-2"/>
    <property type="protein sequence ID" value="ENSMUSP00000109192.3"/>
    <property type="gene ID" value="ENSMUSG00000075415.14"/>
</dbReference>
<dbReference type="Ensembl" id="ENSMUST00000113564.9">
    <molecule id="Q80TY0-3"/>
    <property type="protein sequence ID" value="ENSMUSP00000109194.3"/>
    <property type="gene ID" value="ENSMUSG00000075415.14"/>
</dbReference>
<dbReference type="GeneID" id="14269"/>
<dbReference type="KEGG" id="mmu:14269"/>
<dbReference type="UCSC" id="uc008jdh.1">
    <molecule id="Q80TY0-4"/>
    <property type="organism name" value="mouse"/>
</dbReference>
<dbReference type="UCSC" id="uc008jdi.2">
    <molecule id="Q80TY0-2"/>
    <property type="organism name" value="mouse"/>
</dbReference>
<dbReference type="UCSC" id="uc008jdj.2">
    <molecule id="Q80TY0-1"/>
    <property type="organism name" value="mouse"/>
</dbReference>
<dbReference type="UCSC" id="uc008jdk.2">
    <molecule id="Q80TY0-3"/>
    <property type="organism name" value="mouse"/>
</dbReference>
<dbReference type="UCSC" id="uc008jdm.2">
    <molecule id="Q80TY0-5"/>
    <property type="organism name" value="mouse"/>
</dbReference>
<dbReference type="AGR" id="MGI:109606"/>
<dbReference type="CTD" id="23048"/>
<dbReference type="MGI" id="MGI:109606">
    <property type="gene designation" value="Fnbp1"/>
</dbReference>
<dbReference type="VEuPathDB" id="HostDB:ENSMUSG00000075415"/>
<dbReference type="eggNOG" id="KOG3565">
    <property type="taxonomic scope" value="Eukaryota"/>
</dbReference>
<dbReference type="GeneTree" id="ENSGT00950000183047"/>
<dbReference type="HOGENOM" id="CLU_870262_0_0_1"/>
<dbReference type="InParanoid" id="Q80TY0"/>
<dbReference type="OMA" id="XQNEGTI"/>
<dbReference type="OrthoDB" id="8783038at2759"/>
<dbReference type="PhylomeDB" id="Q80TY0"/>
<dbReference type="TreeFam" id="TF351162"/>
<dbReference type="Reactome" id="R-MMU-8856828">
    <property type="pathway name" value="Clathrin-mediated endocytosis"/>
</dbReference>
<dbReference type="Reactome" id="R-MMU-9013406">
    <property type="pathway name" value="RHOQ GTPase cycle"/>
</dbReference>
<dbReference type="Reactome" id="R-MMU-9696270">
    <property type="pathway name" value="RND2 GTPase cycle"/>
</dbReference>
<dbReference type="BioGRID-ORCS" id="14269">
    <property type="hits" value="0 hits in 80 CRISPR screens"/>
</dbReference>
<dbReference type="ChiTaRS" id="Fnbp1">
    <property type="organism name" value="mouse"/>
</dbReference>
<dbReference type="PRO" id="PR:Q80TY0"/>
<dbReference type="Proteomes" id="UP000000589">
    <property type="component" value="Chromosome 2"/>
</dbReference>
<dbReference type="RNAct" id="Q80TY0">
    <property type="molecule type" value="protein"/>
</dbReference>
<dbReference type="Bgee" id="ENSMUSG00000075415">
    <property type="expression patterns" value="Expressed in cerebellar cortex and 241 other cell types or tissues"/>
</dbReference>
<dbReference type="ExpressionAtlas" id="Q80TY0">
    <property type="expression patterns" value="baseline and differential"/>
</dbReference>
<dbReference type="GO" id="GO:0005938">
    <property type="term" value="C:cell cortex"/>
    <property type="evidence" value="ECO:0007669"/>
    <property type="project" value="UniProtKB-SubCell"/>
</dbReference>
<dbReference type="GO" id="GO:0005905">
    <property type="term" value="C:clathrin-coated pit"/>
    <property type="evidence" value="ECO:0007669"/>
    <property type="project" value="UniProtKB-SubCell"/>
</dbReference>
<dbReference type="GO" id="GO:0031410">
    <property type="term" value="C:cytoplasmic vesicle"/>
    <property type="evidence" value="ECO:0007669"/>
    <property type="project" value="UniProtKB-KW"/>
</dbReference>
<dbReference type="GO" id="GO:0005856">
    <property type="term" value="C:cytoskeleton"/>
    <property type="evidence" value="ECO:0007669"/>
    <property type="project" value="UniProtKB-SubCell"/>
</dbReference>
<dbReference type="GO" id="GO:0005764">
    <property type="term" value="C:lysosome"/>
    <property type="evidence" value="ECO:0007669"/>
    <property type="project" value="UniProtKB-SubCell"/>
</dbReference>
<dbReference type="GO" id="GO:0005886">
    <property type="term" value="C:plasma membrane"/>
    <property type="evidence" value="ECO:0007669"/>
    <property type="project" value="UniProtKB-SubCell"/>
</dbReference>
<dbReference type="GO" id="GO:0042802">
    <property type="term" value="F:identical protein binding"/>
    <property type="evidence" value="ECO:0007669"/>
    <property type="project" value="Ensembl"/>
</dbReference>
<dbReference type="GO" id="GO:0008289">
    <property type="term" value="F:lipid binding"/>
    <property type="evidence" value="ECO:0007669"/>
    <property type="project" value="UniProtKB-KW"/>
</dbReference>
<dbReference type="GO" id="GO:0006897">
    <property type="term" value="P:endocytosis"/>
    <property type="evidence" value="ECO:0007669"/>
    <property type="project" value="UniProtKB-KW"/>
</dbReference>
<dbReference type="GO" id="GO:0007165">
    <property type="term" value="P:signal transduction"/>
    <property type="evidence" value="ECO:0007669"/>
    <property type="project" value="InterPro"/>
</dbReference>
<dbReference type="CDD" id="cd07676">
    <property type="entry name" value="F-BAR_FBP17"/>
    <property type="match status" value="1"/>
</dbReference>
<dbReference type="CDD" id="cd12071">
    <property type="entry name" value="SH3_FBP17"/>
    <property type="match status" value="1"/>
</dbReference>
<dbReference type="FunFam" id="1.20.1270.60:FF:000002">
    <property type="entry name" value="Formin-binding protein 1-like isoform 1"/>
    <property type="match status" value="1"/>
</dbReference>
<dbReference type="FunFam" id="2.30.30.40:FF:000017">
    <property type="entry name" value="Formin-binding protein 1-like isoform 1"/>
    <property type="match status" value="1"/>
</dbReference>
<dbReference type="Gene3D" id="6.10.140.470">
    <property type="match status" value="1"/>
</dbReference>
<dbReference type="Gene3D" id="1.20.1270.60">
    <property type="entry name" value="Arfaptin homology (AH) domain/BAR domain"/>
    <property type="match status" value="1"/>
</dbReference>
<dbReference type="Gene3D" id="2.30.30.40">
    <property type="entry name" value="SH3 Domains"/>
    <property type="match status" value="1"/>
</dbReference>
<dbReference type="InterPro" id="IPR027267">
    <property type="entry name" value="AH/BAR_dom_sf"/>
</dbReference>
<dbReference type="InterPro" id="IPR031160">
    <property type="entry name" value="F_BAR"/>
</dbReference>
<dbReference type="InterPro" id="IPR001060">
    <property type="entry name" value="FCH_dom"/>
</dbReference>
<dbReference type="InterPro" id="IPR037449">
    <property type="entry name" value="FNBP1_F-BAR"/>
</dbReference>
<dbReference type="InterPro" id="IPR035492">
    <property type="entry name" value="FNBP1_SH3"/>
</dbReference>
<dbReference type="InterPro" id="IPR011072">
    <property type="entry name" value="HR1_rho-bd"/>
</dbReference>
<dbReference type="InterPro" id="IPR036028">
    <property type="entry name" value="SH3-like_dom_sf"/>
</dbReference>
<dbReference type="InterPro" id="IPR001452">
    <property type="entry name" value="SH3_domain"/>
</dbReference>
<dbReference type="PANTHER" id="PTHR15735">
    <property type="entry name" value="FCH AND DOUBLE SH3 DOMAINS PROTEIN"/>
    <property type="match status" value="1"/>
</dbReference>
<dbReference type="PANTHER" id="PTHR15735:SF13">
    <property type="entry name" value="FORMIN-BINDING PROTEIN 1"/>
    <property type="match status" value="1"/>
</dbReference>
<dbReference type="Pfam" id="PF00611">
    <property type="entry name" value="FCH"/>
    <property type="match status" value="1"/>
</dbReference>
<dbReference type="Pfam" id="PF00018">
    <property type="entry name" value="SH3_1"/>
    <property type="match status" value="1"/>
</dbReference>
<dbReference type="SMART" id="SM00055">
    <property type="entry name" value="FCH"/>
    <property type="match status" value="1"/>
</dbReference>
<dbReference type="SMART" id="SM00326">
    <property type="entry name" value="SH3"/>
    <property type="match status" value="1"/>
</dbReference>
<dbReference type="SUPFAM" id="SSF103657">
    <property type="entry name" value="BAR/IMD domain-like"/>
    <property type="match status" value="1"/>
</dbReference>
<dbReference type="SUPFAM" id="SSF50044">
    <property type="entry name" value="SH3-domain"/>
    <property type="match status" value="1"/>
</dbReference>
<dbReference type="PROSITE" id="PS51741">
    <property type="entry name" value="F_BAR"/>
    <property type="match status" value="1"/>
</dbReference>
<dbReference type="PROSITE" id="PS51860">
    <property type="entry name" value="REM_1"/>
    <property type="match status" value="1"/>
</dbReference>
<dbReference type="PROSITE" id="PS50002">
    <property type="entry name" value="SH3"/>
    <property type="match status" value="1"/>
</dbReference>
<name>FNBP1_MOUSE</name>
<keyword id="KW-0007">Acetylation</keyword>
<keyword id="KW-0025">Alternative splicing</keyword>
<keyword id="KW-1003">Cell membrane</keyword>
<keyword id="KW-0168">Coated pit</keyword>
<keyword id="KW-0175">Coiled coil</keyword>
<keyword id="KW-0963">Cytoplasm</keyword>
<keyword id="KW-0968">Cytoplasmic vesicle</keyword>
<keyword id="KW-0206">Cytoskeleton</keyword>
<keyword id="KW-0254">Endocytosis</keyword>
<keyword id="KW-0446">Lipid-binding</keyword>
<keyword id="KW-0458">Lysosome</keyword>
<keyword id="KW-0472">Membrane</keyword>
<keyword id="KW-0597">Phosphoprotein</keyword>
<keyword id="KW-1185">Reference proteome</keyword>
<keyword id="KW-0728">SH3 domain</keyword>
<proteinExistence type="evidence at protein level"/>
<feature type="chain" id="PRO_0000261431" description="Formin-binding protein 1">
    <location>
        <begin position="1"/>
        <end position="616"/>
    </location>
</feature>
<feature type="domain" description="F-BAR" evidence="5">
    <location>
        <begin position="1"/>
        <end position="264"/>
    </location>
</feature>
<feature type="domain" description="REM-1" evidence="6">
    <location>
        <begin position="403"/>
        <end position="480"/>
    </location>
</feature>
<feature type="domain" description="SH3" evidence="4">
    <location>
        <begin position="549"/>
        <end position="610"/>
    </location>
</feature>
<feature type="region of interest" description="Interaction with microtubules" evidence="1">
    <location>
        <begin position="1"/>
        <end position="334"/>
    </location>
</feature>
<feature type="region of interest" description="Required for self-association and induction of membrane tubulation" evidence="1">
    <location>
        <begin position="1"/>
        <end position="79"/>
    </location>
</feature>
<feature type="region of interest" description="Required for self-association and induction of membrane tubulation" evidence="1">
    <location>
        <begin position="251"/>
        <end position="616"/>
    </location>
</feature>
<feature type="region of interest" description="Disordered" evidence="7">
    <location>
        <begin position="280"/>
        <end position="314"/>
    </location>
</feature>
<feature type="region of interest" description="Disordered" evidence="7">
    <location>
        <begin position="332"/>
        <end position="366"/>
    </location>
</feature>
<feature type="region of interest" description="Interaction with RND2" evidence="1">
    <location>
        <begin position="399"/>
        <end position="551"/>
    </location>
</feature>
<feature type="region of interest" description="Disordered" evidence="7">
    <location>
        <begin position="487"/>
        <end position="531"/>
    </location>
</feature>
<feature type="region of interest" description="Interaction with PDE6G" evidence="1">
    <location>
        <begin position="494"/>
        <end position="616"/>
    </location>
</feature>
<feature type="region of interest" description="Required for interaction with TNKS" evidence="1">
    <location>
        <begin position="513"/>
        <end position="616"/>
    </location>
</feature>
<feature type="region of interest" description="Interaction with DNM1 and DNM3" evidence="1">
    <location>
        <begin position="534"/>
        <end position="616"/>
    </location>
</feature>
<feature type="region of interest" description="Interaction with ARHGAP17, DAAM1, DIAPH1 and DIAPH2" evidence="1">
    <location>
        <begin position="549"/>
        <end position="616"/>
    </location>
</feature>
<feature type="region of interest" description="Interaction with FASLG" evidence="1">
    <location>
        <begin position="552"/>
        <end position="609"/>
    </location>
</feature>
<feature type="region of interest" description="Interaction with DNM2 and WASL" evidence="1">
    <location>
        <begin position="552"/>
        <end position="608"/>
    </location>
</feature>
<feature type="coiled-coil region" evidence="1">
    <location>
        <begin position="67"/>
        <end position="259"/>
    </location>
</feature>
<feature type="coiled-coil region" evidence="1">
    <location>
        <begin position="398"/>
        <end position="490"/>
    </location>
</feature>
<feature type="compositionally biased region" description="Pro residues" evidence="7">
    <location>
        <begin position="337"/>
        <end position="346"/>
    </location>
</feature>
<feature type="compositionally biased region" description="Polar residues" evidence="7">
    <location>
        <begin position="502"/>
        <end position="511"/>
    </location>
</feature>
<feature type="site" description="Mediates end-to-end attachment of dimers" evidence="1">
    <location>
        <position position="166"/>
    </location>
</feature>
<feature type="modified residue" description="N6-acetyllysine" evidence="3">
    <location>
        <position position="66"/>
    </location>
</feature>
<feature type="modified residue" description="N6-acetyllysine" evidence="3">
    <location>
        <position position="110"/>
    </location>
</feature>
<feature type="modified residue" description="Phosphoserine" evidence="13">
    <location>
        <position position="296"/>
    </location>
</feature>
<feature type="modified residue" description="Phosphoserine" evidence="3">
    <location>
        <position position="299"/>
    </location>
</feature>
<feature type="modified residue" description="Phosphoserine" evidence="3">
    <location>
        <position position="348"/>
    </location>
</feature>
<feature type="modified residue" description="Phosphoserine" evidence="3">
    <location>
        <position position="358"/>
    </location>
</feature>
<feature type="modified residue" description="Phosphoserine" evidence="12 14">
    <location>
        <position position="496"/>
    </location>
</feature>
<feature type="modified residue" description="Phosphotyrosine" evidence="12">
    <location>
        <position position="499"/>
    </location>
</feature>
<feature type="modified residue" description="Phosphoserine" evidence="2">
    <location>
        <position position="520"/>
    </location>
</feature>
<feature type="splice variant" id="VSP_021697" description="In isoform 4." evidence="10">
    <location>
        <begin position="1"/>
        <end position="79"/>
    </location>
</feature>
<feature type="splice variant" id="VSP_021698" description="In isoform 2 and isoform 3." evidence="10">
    <location>
        <begin position="329"/>
        <end position="394"/>
    </location>
</feature>
<feature type="splice variant" id="VSP_021699" description="In isoform 4." evidence="10">
    <location>
        <begin position="329"/>
        <end position="338"/>
    </location>
</feature>
<feature type="splice variant" id="VSP_021700" description="In isoform 5." evidence="9 10">
    <original>LMSLLTSPHQ</original>
    <variation>VLAIWTLRGL</variation>
    <location>
        <begin position="329"/>
        <end position="338"/>
    </location>
</feature>
<feature type="splice variant" id="VSP_021701" description="In isoform 5." evidence="9 10">
    <location>
        <begin position="339"/>
        <end position="616"/>
    </location>
</feature>
<feature type="splice variant" id="VSP_021702" description="In isoform 4." evidence="10">
    <location>
        <begin position="390"/>
        <end position="394"/>
    </location>
</feature>
<feature type="splice variant" id="VSP_021703" description="In isoform 3." evidence="10">
    <original>E</original>
    <variation>ES</variation>
    <location>
        <position position="515"/>
    </location>
</feature>
<comment type="function">
    <text evidence="1">Required to coordinate membrane tubulation with reorganization of the actin cytoskeleton during the late stage of clathrin-mediated endocytosis. Binds to lipids such as phosphatidylinositol 4,5-bisphosphate and phosphatidylserine and promotes membrane invagination and the formation of tubules. Also enhances actin polymerization via the recruitment of WASL/N-WASP, which in turn activates the Arp2/3 complex. Actin polymerization may promote the fission of membrane tubules to form endocytic vesicles. May act as a link between RND2 signaling and regulation of the actin cytoskeleton. May be required for the lysosomal retention of FASLG/FASL (By similarity).</text>
</comment>
<comment type="subunit">
    <text evidence="1">Homodimerizes, the dimers can polymerize end-to-end to form filamentous structures. Interacts specifically with GTP-bound RND2 and CDC42. Interacts with AKAP9, ARHGAP17, DAAM1, DIAPH1, DIAPH2, DNM1, DNM2, DNM3, FASLG/FASL, microtubules, PDE6G, SNX2 and WASL/N-WASP. May interact with TNKS (By similarity).</text>
</comment>
<comment type="subcellular location">
    <subcellularLocation>
        <location evidence="1">Cytoplasm</location>
    </subcellularLocation>
    <subcellularLocation>
        <location evidence="1">Cytoplasm</location>
        <location evidence="1">Cytoskeleton</location>
    </subcellularLocation>
    <subcellularLocation>
        <location evidence="1">Cytoplasm</location>
        <location evidence="1">Cell cortex</location>
    </subcellularLocation>
    <subcellularLocation>
        <location evidence="1">Lysosome</location>
    </subcellularLocation>
    <subcellularLocation>
        <location evidence="1">Cytoplasmic vesicle</location>
    </subcellularLocation>
    <subcellularLocation>
        <location evidence="1">Cell membrane</location>
        <topology evidence="1">Peripheral membrane protein</topology>
        <orientation evidence="1">Cytoplasmic side</orientation>
    </subcellularLocation>
    <subcellularLocation>
        <location evidence="1">Membrane</location>
        <location evidence="1">Clathrin-coated pit</location>
    </subcellularLocation>
    <text evidence="1">Enriched in cortical regions coincident with F-actin. Also localizes to endocytic vesicles and lysosomes.</text>
</comment>
<comment type="alternative products">
    <event type="alternative splicing"/>
    <isoform>
        <id>Q80TY0-1</id>
        <name>1</name>
        <sequence type="displayed"/>
    </isoform>
    <isoform>
        <id>Q80TY0-2</id>
        <name>2</name>
        <sequence type="described" ref="VSP_021698"/>
    </isoform>
    <isoform>
        <id>Q80TY0-3</id>
        <name>3</name>
        <sequence type="described" ref="VSP_021698 VSP_021703"/>
    </isoform>
    <isoform>
        <id>Q80TY0-4</id>
        <name>4</name>
        <sequence type="described" ref="VSP_021697 VSP_021699 VSP_021702"/>
    </isoform>
    <isoform>
        <id>Q80TY0-5</id>
        <name>5</name>
        <sequence type="described" ref="VSP_021700 VSP_021701"/>
    </isoform>
</comment>
<comment type="tissue specificity">
    <text evidence="8">Expressed in brain and testis.</text>
</comment>
<comment type="domain">
    <text evidence="1">The F-BAR domain binds the phospholipid membrane with its concave surface. The end-to-end polymerization of dimers of these domains provides a curved surface that fits best membranes with around 600 A diameter, and may drive tubulation (By similarity).</text>
</comment>
<comment type="similarity">
    <text evidence="11">Belongs to the FNBP1 family.</text>
</comment>
<comment type="sequence caution" evidence="11">
    <conflict type="erroneous initiation">
        <sequence resource="EMBL-CDS" id="BAC65590"/>
    </conflict>
</comment>
<comment type="sequence caution" evidence="11">
    <conflict type="erroneous initiation">
        <sequence resource="EMBL-CDS" id="BAE33974"/>
    </conflict>
</comment>